<gene>
    <name evidence="4" type="primary">pdxI</name>
    <name evidence="6" type="synonym">ydbC</name>
    <name type="ordered locus">b1406</name>
    <name type="ordered locus">JW1403</name>
</gene>
<proteinExistence type="evidence at protein level"/>
<keyword id="KW-0002">3D-structure</keyword>
<keyword id="KW-0520">NAD</keyword>
<keyword id="KW-0521">NADP</keyword>
<keyword id="KW-0560">Oxidoreductase</keyword>
<keyword id="KW-1185">Reference proteome</keyword>
<name>PDXI_ECOLI</name>
<evidence type="ECO:0000250" key="1"/>
<evidence type="ECO:0000269" key="2">
    <source>
    </source>
</evidence>
<evidence type="ECO:0000269" key="3">
    <source>
    </source>
</evidence>
<evidence type="ECO:0000303" key="4">
    <source>
    </source>
</evidence>
<evidence type="ECO:0000305" key="5"/>
<evidence type="ECO:0000312" key="6">
    <source>
        <dbReference type="EMBL" id="AAC74488.1"/>
    </source>
</evidence>
<organism>
    <name type="scientific">Escherichia coli (strain K12)</name>
    <dbReference type="NCBI Taxonomy" id="83333"/>
    <lineage>
        <taxon>Bacteria</taxon>
        <taxon>Pseudomonadati</taxon>
        <taxon>Pseudomonadota</taxon>
        <taxon>Gammaproteobacteria</taxon>
        <taxon>Enterobacterales</taxon>
        <taxon>Enterobacteriaceae</taxon>
        <taxon>Escherichia</taxon>
    </lineage>
</organism>
<sequence>MSSNTFTLGTKSVNRLGYGAMQLAGPGVFGPPRDRHVAITVLREALALGVNHIDTSDFYGPHVTNQIIREALYPYSDDLTIVTKIGARRGEDASWLPAFSPAELQKAVHDNLRNLGLDVLDVVNLRVMMGDGHGPAEGSIEASLTVLAEMQQQGLVKHIGLSNVTPTQVAEARKIAEIVCVQNEYNIAHRADDAMIDALAHDGIAYVPFFPLGGFTPLQSSTLSDVAASLGATPMQVALAWLLQRSPNILLIPGTSSVAHLRENMAAEKLHLSEEVLSTLDGISRE</sequence>
<feature type="chain" id="PRO_0000070393" description="Pyridoxine 4-dehydrogenase">
    <location>
        <begin position="1"/>
        <end position="286"/>
    </location>
</feature>
<feature type="active site" description="Proton donor" evidence="1">
    <location>
        <position position="59"/>
    </location>
</feature>
<feature type="binding site" evidence="1">
    <location>
        <begin position="210"/>
        <end position="218"/>
    </location>
    <ligand>
        <name>NADP(+)</name>
        <dbReference type="ChEBI" id="CHEBI:58349"/>
    </ligand>
</feature>
<accession>P25906</accession>
<dbReference type="EC" id="1.1.1.65" evidence="3"/>
<dbReference type="EMBL" id="X62680">
    <property type="protein sequence ID" value="CAA44553.1"/>
    <property type="molecule type" value="Genomic_DNA"/>
</dbReference>
<dbReference type="EMBL" id="U00096">
    <property type="protein sequence ID" value="AAC74488.1"/>
    <property type="molecule type" value="Genomic_DNA"/>
</dbReference>
<dbReference type="EMBL" id="AP009048">
    <property type="protein sequence ID" value="BAA15021.1"/>
    <property type="molecule type" value="Genomic_DNA"/>
</dbReference>
<dbReference type="EMBL" id="X97452">
    <property type="protein sequence ID" value="CAA66103.1"/>
    <property type="molecule type" value="Genomic_DNA"/>
</dbReference>
<dbReference type="PIR" id="A48399">
    <property type="entry name" value="A48399"/>
</dbReference>
<dbReference type="RefSeq" id="NP_415924.1">
    <property type="nucleotide sequence ID" value="NC_000913.3"/>
</dbReference>
<dbReference type="RefSeq" id="WP_000097801.1">
    <property type="nucleotide sequence ID" value="NZ_SSZK01000021.1"/>
</dbReference>
<dbReference type="PDB" id="8TE8">
    <property type="method" value="X-ray"/>
    <property type="resolution" value="2.20 A"/>
    <property type="chains" value="A/B=1-286"/>
</dbReference>
<dbReference type="PDB" id="8TEZ">
    <property type="method" value="X-ray"/>
    <property type="resolution" value="2.30 A"/>
    <property type="chains" value="A/B=1-286"/>
</dbReference>
<dbReference type="PDB" id="8TF1">
    <property type="method" value="X-ray"/>
    <property type="resolution" value="2.00 A"/>
    <property type="chains" value="A=1-286"/>
</dbReference>
<dbReference type="PDBsum" id="8TE8"/>
<dbReference type="PDBsum" id="8TEZ"/>
<dbReference type="PDBsum" id="8TF1"/>
<dbReference type="SMR" id="P25906"/>
<dbReference type="BioGRID" id="4263019">
    <property type="interactions" value="19"/>
</dbReference>
<dbReference type="DIP" id="DIP-11632N"/>
<dbReference type="FunCoup" id="P25906">
    <property type="interactions" value="129"/>
</dbReference>
<dbReference type="IntAct" id="P25906">
    <property type="interactions" value="4"/>
</dbReference>
<dbReference type="STRING" id="511145.b1406"/>
<dbReference type="jPOST" id="P25906"/>
<dbReference type="PaxDb" id="511145-b1406"/>
<dbReference type="DNASU" id="945980"/>
<dbReference type="EnsemblBacteria" id="AAC74488">
    <property type="protein sequence ID" value="AAC74488"/>
    <property type="gene ID" value="b1406"/>
</dbReference>
<dbReference type="GeneID" id="75203487"/>
<dbReference type="GeneID" id="945980"/>
<dbReference type="KEGG" id="ecj:JW1403"/>
<dbReference type="KEGG" id="eco:b1406"/>
<dbReference type="KEGG" id="ecoc:C3026_08195"/>
<dbReference type="PATRIC" id="fig|1411691.4.peg.865"/>
<dbReference type="EchoBASE" id="EB1285"/>
<dbReference type="eggNOG" id="COG0667">
    <property type="taxonomic scope" value="Bacteria"/>
</dbReference>
<dbReference type="HOGENOM" id="CLU_023205_2_1_6"/>
<dbReference type="InParanoid" id="P25906"/>
<dbReference type="OMA" id="FIPWFPV"/>
<dbReference type="OrthoDB" id="9768793at2"/>
<dbReference type="PhylomeDB" id="P25906"/>
<dbReference type="BioCyc" id="EcoCyc:EG11309-MONOMER"/>
<dbReference type="BioCyc" id="MetaCyc:EG11309-MONOMER"/>
<dbReference type="PRO" id="PR:P25906"/>
<dbReference type="Proteomes" id="UP000000625">
    <property type="component" value="Chromosome"/>
</dbReference>
<dbReference type="GO" id="GO:0005737">
    <property type="term" value="C:cytoplasm"/>
    <property type="evidence" value="ECO:0000318"/>
    <property type="project" value="GO_Central"/>
</dbReference>
<dbReference type="GO" id="GO:0005829">
    <property type="term" value="C:cytosol"/>
    <property type="evidence" value="ECO:0000314"/>
    <property type="project" value="EcoCyc"/>
</dbReference>
<dbReference type="GO" id="GO:0004033">
    <property type="term" value="F:aldo-keto reductase (NADPH) activity"/>
    <property type="evidence" value="ECO:0000318"/>
    <property type="project" value="GO_Central"/>
</dbReference>
<dbReference type="GO" id="GO:0050236">
    <property type="term" value="F:pyridoxine:NADP 4-dehydrogenase activity"/>
    <property type="evidence" value="ECO:0000314"/>
    <property type="project" value="EcoCyc"/>
</dbReference>
<dbReference type="GO" id="GO:0009443">
    <property type="term" value="P:pyridoxal 5'-phosphate salvage"/>
    <property type="evidence" value="ECO:0000315"/>
    <property type="project" value="EcoCyc"/>
</dbReference>
<dbReference type="CDD" id="cd19088">
    <property type="entry name" value="AKR_AKR13B1"/>
    <property type="match status" value="1"/>
</dbReference>
<dbReference type="FunFam" id="3.20.20.100:FF:000021">
    <property type="entry name" value="Hypothetical oxidoreductase YdbC"/>
    <property type="match status" value="1"/>
</dbReference>
<dbReference type="Gene3D" id="3.20.20.100">
    <property type="entry name" value="NADP-dependent oxidoreductase domain"/>
    <property type="match status" value="1"/>
</dbReference>
<dbReference type="InterPro" id="IPR050791">
    <property type="entry name" value="Aldo-Keto_reductase"/>
</dbReference>
<dbReference type="InterPro" id="IPR023210">
    <property type="entry name" value="NADP_OxRdtase_dom"/>
</dbReference>
<dbReference type="InterPro" id="IPR036812">
    <property type="entry name" value="NADP_OxRdtase_dom_sf"/>
</dbReference>
<dbReference type="NCBIfam" id="NF007695">
    <property type="entry name" value="PRK10376.1"/>
    <property type="match status" value="1"/>
</dbReference>
<dbReference type="PANTHER" id="PTHR43625">
    <property type="entry name" value="AFLATOXIN B1 ALDEHYDE REDUCTASE"/>
    <property type="match status" value="1"/>
</dbReference>
<dbReference type="PANTHER" id="PTHR43625:SF40">
    <property type="entry name" value="ALDO-KETO REDUCTASE YAKC [NADP(+)]"/>
    <property type="match status" value="1"/>
</dbReference>
<dbReference type="Pfam" id="PF00248">
    <property type="entry name" value="Aldo_ket_red"/>
    <property type="match status" value="1"/>
</dbReference>
<dbReference type="SUPFAM" id="SSF51430">
    <property type="entry name" value="NAD(P)-linked oxidoreductase"/>
    <property type="match status" value="1"/>
</dbReference>
<comment type="function">
    <text evidence="2 3">Catalyzes the NAD(P)H-dependent reduction of pyridoxal to pyridoxine in vitro. Is not able to reduce 4-pyridoxate, and to oxidize pyridoxine or pyridoxamine (PubMed:27941785). Has Kemp eliminase activity towards the non-physiological substrate 5-nitrobenzisoxazole, producing 4-nitro-2-cyanophenol; this activity is not considered to be physiologically relevant (PubMed:21332126).</text>
</comment>
<comment type="catalytic activity">
    <reaction evidence="3">
        <text>pyridoxine + NADP(+) = pyridoxal + NADPH + H(+)</text>
        <dbReference type="Rhea" id="RHEA:16129"/>
        <dbReference type="ChEBI" id="CHEBI:15378"/>
        <dbReference type="ChEBI" id="CHEBI:16709"/>
        <dbReference type="ChEBI" id="CHEBI:17310"/>
        <dbReference type="ChEBI" id="CHEBI:57783"/>
        <dbReference type="ChEBI" id="CHEBI:58349"/>
        <dbReference type="EC" id="1.1.1.65"/>
    </reaction>
</comment>
<comment type="catalytic activity">
    <reaction evidence="3">
        <text>pyridoxine + NAD(+) = pyridoxal + NADH + H(+)</text>
        <dbReference type="Rhea" id="RHEA:52684"/>
        <dbReference type="ChEBI" id="CHEBI:15378"/>
        <dbReference type="ChEBI" id="CHEBI:16709"/>
        <dbReference type="ChEBI" id="CHEBI:17310"/>
        <dbReference type="ChEBI" id="CHEBI:57540"/>
        <dbReference type="ChEBI" id="CHEBI:57945"/>
    </reaction>
</comment>
<comment type="biophysicochemical properties">
    <kinetics>
        <KM evidence="2">270 uM for 5-nitrobenzisoxazole</KM>
        <text evidence="2">kcat is 0.11 sec(-1) for the Kemp eliminase activity towards 5-nitrobenzisoxazole.</text>
    </kinetics>
</comment>
<comment type="similarity">
    <text evidence="5">Belongs to the aldo/keto reductase family. Aldo/keto reductase 2 subfamily.</text>
</comment>
<reference key="1">
    <citation type="journal article" date="1991" name="Biochimie">
        <title>Multiple IS insertion sequences near the replication terminus in Escherichia coli K-12.</title>
        <authorList>
            <person name="Moszer I."/>
            <person name="Glaser P."/>
            <person name="Danchin A."/>
        </authorList>
    </citation>
    <scope>NUCLEOTIDE SEQUENCE [GENOMIC DNA]</scope>
    <source>
        <strain>K12</strain>
    </source>
</reference>
<reference key="2">
    <citation type="journal article" date="1996" name="DNA Res.">
        <title>A 570-kb DNA sequence of the Escherichia coli K-12 genome corresponding to the 28.0-40.1 min region on the linkage map.</title>
        <authorList>
            <person name="Aiba H."/>
            <person name="Baba T."/>
            <person name="Fujita K."/>
            <person name="Hayashi K."/>
            <person name="Inada T."/>
            <person name="Isono K."/>
            <person name="Itoh T."/>
            <person name="Kasai H."/>
            <person name="Kashimoto K."/>
            <person name="Kimura S."/>
            <person name="Kitakawa M."/>
            <person name="Kitagawa M."/>
            <person name="Makino K."/>
            <person name="Miki T."/>
            <person name="Mizobuchi K."/>
            <person name="Mori H."/>
            <person name="Mori T."/>
            <person name="Motomura K."/>
            <person name="Nakade S."/>
            <person name="Nakamura Y."/>
            <person name="Nashimoto H."/>
            <person name="Nishio Y."/>
            <person name="Oshima T."/>
            <person name="Saito N."/>
            <person name="Sampei G."/>
            <person name="Seki Y."/>
            <person name="Sivasundaram S."/>
            <person name="Tagami H."/>
            <person name="Takeda J."/>
            <person name="Takemoto K."/>
            <person name="Takeuchi Y."/>
            <person name="Wada C."/>
            <person name="Yamamoto Y."/>
            <person name="Horiuchi T."/>
        </authorList>
    </citation>
    <scope>NUCLEOTIDE SEQUENCE [LARGE SCALE GENOMIC DNA]</scope>
    <source>
        <strain>K12 / W3110 / ATCC 27325 / DSM 5911</strain>
    </source>
</reference>
<reference key="3">
    <citation type="journal article" date="1997" name="Science">
        <title>The complete genome sequence of Escherichia coli K-12.</title>
        <authorList>
            <person name="Blattner F.R."/>
            <person name="Plunkett G. III"/>
            <person name="Bloch C.A."/>
            <person name="Perna N.T."/>
            <person name="Burland V."/>
            <person name="Riley M."/>
            <person name="Collado-Vides J."/>
            <person name="Glasner J.D."/>
            <person name="Rode C.K."/>
            <person name="Mayhew G.F."/>
            <person name="Gregor J."/>
            <person name="Davis N.W."/>
            <person name="Kirkpatrick H.A."/>
            <person name="Goeden M.A."/>
            <person name="Rose D.J."/>
            <person name="Mau B."/>
            <person name="Shao Y."/>
        </authorList>
    </citation>
    <scope>NUCLEOTIDE SEQUENCE [LARGE SCALE GENOMIC DNA]</scope>
    <source>
        <strain>K12 / MG1655 / ATCC 47076</strain>
    </source>
</reference>
<reference key="4">
    <citation type="journal article" date="2006" name="Mol. Syst. Biol.">
        <title>Highly accurate genome sequences of Escherichia coli K-12 strains MG1655 and W3110.</title>
        <authorList>
            <person name="Hayashi K."/>
            <person name="Morooka N."/>
            <person name="Yamamoto Y."/>
            <person name="Fujita K."/>
            <person name="Isono K."/>
            <person name="Choi S."/>
            <person name="Ohtsubo E."/>
            <person name="Baba T."/>
            <person name="Wanner B.L."/>
            <person name="Mori H."/>
            <person name="Horiuchi T."/>
        </authorList>
    </citation>
    <scope>NUCLEOTIDE SEQUENCE [LARGE SCALE GENOMIC DNA]</scope>
    <source>
        <strain>K12 / W3110 / ATCC 27325 / DSM 5911</strain>
    </source>
</reference>
<reference key="5">
    <citation type="journal article" date="1998" name="J. Biol. Chem.">
        <title>Catabolism of phenylacetic acid in Escherichia coli. Characterization of a new aerobic hybrid pathway.</title>
        <authorList>
            <person name="Ferrandez A."/>
            <person name="Minambres B."/>
            <person name="Garcia B."/>
            <person name="Olivera E.R."/>
            <person name="Luengo J.M."/>
            <person name="Garcia J.L."/>
            <person name="Diaz E."/>
        </authorList>
    </citation>
    <scope>NUCLEOTIDE SEQUENCE [GENOMIC DNA] OF 1-69</scope>
    <source>
        <strain>W / ATCC 11105 / DSM 1900</strain>
    </source>
</reference>
<reference key="6">
    <citation type="journal article" date="2011" name="Biochemistry">
        <title>Role of chemistry versus substrate binding in recruiting promiscuous enzyme functions.</title>
        <authorList>
            <person name="Khersonsky O."/>
            <person name="Malitsky S."/>
            <person name="Rogachev I."/>
            <person name="Tawfik D.S."/>
        </authorList>
    </citation>
    <scope>FUNCTION</scope>
    <scope>BIOPHYSICOCHEMICAL PROPERTIES</scope>
</reference>
<reference key="7">
    <citation type="journal article" date="2017" name="Nat. Methods">
        <title>Nontargeted in vitro metabolomics for high-throughput identification of novel enzymes in Escherichia coli.</title>
        <authorList>
            <person name="Sevin D.C."/>
            <person name="Fuhrer T."/>
            <person name="Zamboni N."/>
            <person name="Sauer U."/>
        </authorList>
    </citation>
    <scope>FUNCTION</scope>
    <scope>CATALYTIC ACTIVITY</scope>
    <source>
        <strain>K12</strain>
    </source>
</reference>
<protein>
    <recommendedName>
        <fullName evidence="4">Pyridoxine 4-dehydrogenase</fullName>
        <ecNumber evidence="3">1.1.1.65</ecNumber>
    </recommendedName>
</protein>